<keyword id="KW-0227">DNA damage</keyword>
<keyword id="KW-0234">DNA repair</keyword>
<keyword id="KW-0235">DNA replication</keyword>
<keyword id="KW-0436">Ligase</keyword>
<keyword id="KW-0460">Magnesium</keyword>
<keyword id="KW-0464">Manganese</keyword>
<keyword id="KW-0479">Metal-binding</keyword>
<keyword id="KW-0520">NAD</keyword>
<keyword id="KW-1185">Reference proteome</keyword>
<keyword id="KW-0862">Zinc</keyword>
<reference key="1">
    <citation type="submission" date="2003-10" db="EMBL/GenBank/DDBJ databases">
        <title>The complete genome sequence of the alkaliphilic Bacillus clausii KSM-K16.</title>
        <authorList>
            <person name="Takaki Y."/>
            <person name="Kageyama Y."/>
            <person name="Shimamura S."/>
            <person name="Suzuki H."/>
            <person name="Nishi S."/>
            <person name="Hatada Y."/>
            <person name="Kawai S."/>
            <person name="Ito S."/>
            <person name="Horikoshi K."/>
        </authorList>
    </citation>
    <scope>NUCLEOTIDE SEQUENCE [LARGE SCALE GENOMIC DNA]</scope>
    <source>
        <strain>KSM-K16</strain>
    </source>
</reference>
<evidence type="ECO:0000255" key="1">
    <source>
        <dbReference type="HAMAP-Rule" id="MF_01588"/>
    </source>
</evidence>
<proteinExistence type="inferred from homology"/>
<dbReference type="EC" id="6.5.1.2" evidence="1"/>
<dbReference type="EMBL" id="AP006627">
    <property type="protein sequence ID" value="BAD63625.1"/>
    <property type="molecule type" value="Genomic_DNA"/>
</dbReference>
<dbReference type="RefSeq" id="WP_011245940.1">
    <property type="nucleotide sequence ID" value="NC_006582.1"/>
</dbReference>
<dbReference type="SMR" id="Q5WJ30"/>
<dbReference type="STRING" id="66692.ABC1087"/>
<dbReference type="KEGG" id="bcl:ABC1087"/>
<dbReference type="eggNOG" id="COG0272">
    <property type="taxonomic scope" value="Bacteria"/>
</dbReference>
<dbReference type="HOGENOM" id="CLU_007764_2_1_9"/>
<dbReference type="OrthoDB" id="9759736at2"/>
<dbReference type="Proteomes" id="UP000001168">
    <property type="component" value="Chromosome"/>
</dbReference>
<dbReference type="GO" id="GO:0005829">
    <property type="term" value="C:cytosol"/>
    <property type="evidence" value="ECO:0007669"/>
    <property type="project" value="TreeGrafter"/>
</dbReference>
<dbReference type="GO" id="GO:0003677">
    <property type="term" value="F:DNA binding"/>
    <property type="evidence" value="ECO:0007669"/>
    <property type="project" value="InterPro"/>
</dbReference>
<dbReference type="GO" id="GO:0003911">
    <property type="term" value="F:DNA ligase (NAD+) activity"/>
    <property type="evidence" value="ECO:0007669"/>
    <property type="project" value="UniProtKB-UniRule"/>
</dbReference>
<dbReference type="GO" id="GO:0046872">
    <property type="term" value="F:metal ion binding"/>
    <property type="evidence" value="ECO:0007669"/>
    <property type="project" value="UniProtKB-KW"/>
</dbReference>
<dbReference type="GO" id="GO:0006281">
    <property type="term" value="P:DNA repair"/>
    <property type="evidence" value="ECO:0007669"/>
    <property type="project" value="UniProtKB-KW"/>
</dbReference>
<dbReference type="GO" id="GO:0006260">
    <property type="term" value="P:DNA replication"/>
    <property type="evidence" value="ECO:0007669"/>
    <property type="project" value="UniProtKB-KW"/>
</dbReference>
<dbReference type="CDD" id="cd17748">
    <property type="entry name" value="BRCT_DNA_ligase_like"/>
    <property type="match status" value="1"/>
</dbReference>
<dbReference type="CDD" id="cd00114">
    <property type="entry name" value="LIGANc"/>
    <property type="match status" value="1"/>
</dbReference>
<dbReference type="FunFam" id="1.10.150.20:FF:000006">
    <property type="entry name" value="DNA ligase"/>
    <property type="match status" value="1"/>
</dbReference>
<dbReference type="FunFam" id="1.10.150.20:FF:000007">
    <property type="entry name" value="DNA ligase"/>
    <property type="match status" value="1"/>
</dbReference>
<dbReference type="FunFam" id="1.10.287.610:FF:000002">
    <property type="entry name" value="DNA ligase"/>
    <property type="match status" value="1"/>
</dbReference>
<dbReference type="FunFam" id="2.40.50.140:FF:000012">
    <property type="entry name" value="DNA ligase"/>
    <property type="match status" value="1"/>
</dbReference>
<dbReference type="FunFam" id="3.30.470.30:FF:000001">
    <property type="entry name" value="DNA ligase"/>
    <property type="match status" value="1"/>
</dbReference>
<dbReference type="Gene3D" id="6.20.10.30">
    <property type="match status" value="1"/>
</dbReference>
<dbReference type="Gene3D" id="1.10.150.20">
    <property type="entry name" value="5' to 3' exonuclease, C-terminal subdomain"/>
    <property type="match status" value="2"/>
</dbReference>
<dbReference type="Gene3D" id="3.40.50.10190">
    <property type="entry name" value="BRCT domain"/>
    <property type="match status" value="1"/>
</dbReference>
<dbReference type="Gene3D" id="3.30.470.30">
    <property type="entry name" value="DNA ligase/mRNA capping enzyme"/>
    <property type="match status" value="1"/>
</dbReference>
<dbReference type="Gene3D" id="1.10.287.610">
    <property type="entry name" value="Helix hairpin bin"/>
    <property type="match status" value="1"/>
</dbReference>
<dbReference type="Gene3D" id="2.40.50.140">
    <property type="entry name" value="Nucleic acid-binding proteins"/>
    <property type="match status" value="1"/>
</dbReference>
<dbReference type="HAMAP" id="MF_01588">
    <property type="entry name" value="DNA_ligase_A"/>
    <property type="match status" value="1"/>
</dbReference>
<dbReference type="InterPro" id="IPR001357">
    <property type="entry name" value="BRCT_dom"/>
</dbReference>
<dbReference type="InterPro" id="IPR036420">
    <property type="entry name" value="BRCT_dom_sf"/>
</dbReference>
<dbReference type="InterPro" id="IPR041663">
    <property type="entry name" value="DisA/LigA_HHH"/>
</dbReference>
<dbReference type="InterPro" id="IPR001679">
    <property type="entry name" value="DNA_ligase"/>
</dbReference>
<dbReference type="InterPro" id="IPR018239">
    <property type="entry name" value="DNA_ligase_AS"/>
</dbReference>
<dbReference type="InterPro" id="IPR033136">
    <property type="entry name" value="DNA_ligase_CS"/>
</dbReference>
<dbReference type="InterPro" id="IPR013839">
    <property type="entry name" value="DNAligase_adenylation"/>
</dbReference>
<dbReference type="InterPro" id="IPR013840">
    <property type="entry name" value="DNAligase_N"/>
</dbReference>
<dbReference type="InterPro" id="IPR003583">
    <property type="entry name" value="Hlx-hairpin-Hlx_DNA-bd_motif"/>
</dbReference>
<dbReference type="InterPro" id="IPR012340">
    <property type="entry name" value="NA-bd_OB-fold"/>
</dbReference>
<dbReference type="InterPro" id="IPR004150">
    <property type="entry name" value="NAD_DNA_ligase_OB"/>
</dbReference>
<dbReference type="InterPro" id="IPR010994">
    <property type="entry name" value="RuvA_2-like"/>
</dbReference>
<dbReference type="InterPro" id="IPR004149">
    <property type="entry name" value="Znf_DNAligase_C4"/>
</dbReference>
<dbReference type="NCBIfam" id="TIGR00575">
    <property type="entry name" value="dnlj"/>
    <property type="match status" value="1"/>
</dbReference>
<dbReference type="NCBIfam" id="NF005932">
    <property type="entry name" value="PRK07956.1"/>
    <property type="match status" value="1"/>
</dbReference>
<dbReference type="PANTHER" id="PTHR23389">
    <property type="entry name" value="CHROMOSOME TRANSMISSION FIDELITY FACTOR 18"/>
    <property type="match status" value="1"/>
</dbReference>
<dbReference type="PANTHER" id="PTHR23389:SF9">
    <property type="entry name" value="DNA LIGASE"/>
    <property type="match status" value="1"/>
</dbReference>
<dbReference type="Pfam" id="PF00533">
    <property type="entry name" value="BRCT"/>
    <property type="match status" value="1"/>
</dbReference>
<dbReference type="Pfam" id="PF01653">
    <property type="entry name" value="DNA_ligase_aden"/>
    <property type="match status" value="1"/>
</dbReference>
<dbReference type="Pfam" id="PF03120">
    <property type="entry name" value="DNA_ligase_OB"/>
    <property type="match status" value="1"/>
</dbReference>
<dbReference type="Pfam" id="PF03119">
    <property type="entry name" value="DNA_ligase_ZBD"/>
    <property type="match status" value="1"/>
</dbReference>
<dbReference type="Pfam" id="PF12826">
    <property type="entry name" value="HHH_2"/>
    <property type="match status" value="1"/>
</dbReference>
<dbReference type="PIRSF" id="PIRSF001604">
    <property type="entry name" value="LigA"/>
    <property type="match status" value="1"/>
</dbReference>
<dbReference type="SMART" id="SM00292">
    <property type="entry name" value="BRCT"/>
    <property type="match status" value="1"/>
</dbReference>
<dbReference type="SMART" id="SM00278">
    <property type="entry name" value="HhH1"/>
    <property type="match status" value="3"/>
</dbReference>
<dbReference type="SMART" id="SM00532">
    <property type="entry name" value="LIGANc"/>
    <property type="match status" value="1"/>
</dbReference>
<dbReference type="SUPFAM" id="SSF52113">
    <property type="entry name" value="BRCT domain"/>
    <property type="match status" value="1"/>
</dbReference>
<dbReference type="SUPFAM" id="SSF56091">
    <property type="entry name" value="DNA ligase/mRNA capping enzyme, catalytic domain"/>
    <property type="match status" value="1"/>
</dbReference>
<dbReference type="SUPFAM" id="SSF50249">
    <property type="entry name" value="Nucleic acid-binding proteins"/>
    <property type="match status" value="1"/>
</dbReference>
<dbReference type="SUPFAM" id="SSF47781">
    <property type="entry name" value="RuvA domain 2-like"/>
    <property type="match status" value="1"/>
</dbReference>
<dbReference type="PROSITE" id="PS50172">
    <property type="entry name" value="BRCT"/>
    <property type="match status" value="1"/>
</dbReference>
<dbReference type="PROSITE" id="PS01055">
    <property type="entry name" value="DNA_LIGASE_N1"/>
    <property type="match status" value="1"/>
</dbReference>
<dbReference type="PROSITE" id="PS01056">
    <property type="entry name" value="DNA_LIGASE_N2"/>
    <property type="match status" value="1"/>
</dbReference>
<accession>Q5WJ30</accession>
<gene>
    <name evidence="1" type="primary">ligA</name>
    <name type="ordered locus">ABC1087</name>
</gene>
<comment type="function">
    <text evidence="1">DNA ligase that catalyzes the formation of phosphodiester linkages between 5'-phosphoryl and 3'-hydroxyl groups in double-stranded DNA using NAD as a coenzyme and as the energy source for the reaction. It is essential for DNA replication and repair of damaged DNA.</text>
</comment>
<comment type="catalytic activity">
    <reaction evidence="1">
        <text>NAD(+) + (deoxyribonucleotide)n-3'-hydroxyl + 5'-phospho-(deoxyribonucleotide)m = (deoxyribonucleotide)n+m + AMP + beta-nicotinamide D-nucleotide.</text>
        <dbReference type="EC" id="6.5.1.2"/>
    </reaction>
</comment>
<comment type="cofactor">
    <cofactor evidence="1">
        <name>Mg(2+)</name>
        <dbReference type="ChEBI" id="CHEBI:18420"/>
    </cofactor>
    <cofactor evidence="1">
        <name>Mn(2+)</name>
        <dbReference type="ChEBI" id="CHEBI:29035"/>
    </cofactor>
</comment>
<comment type="similarity">
    <text evidence="1">Belongs to the NAD-dependent DNA ligase family. LigA subfamily.</text>
</comment>
<protein>
    <recommendedName>
        <fullName evidence="1">DNA ligase</fullName>
        <ecNumber evidence="1">6.5.1.2</ecNumber>
    </recommendedName>
    <alternativeName>
        <fullName evidence="1">Polydeoxyribonucleotide synthase [NAD(+)]</fullName>
    </alternativeName>
</protein>
<organism>
    <name type="scientific">Shouchella clausii (strain KSM-K16)</name>
    <name type="common">Alkalihalobacillus clausii</name>
    <dbReference type="NCBI Taxonomy" id="66692"/>
    <lineage>
        <taxon>Bacteria</taxon>
        <taxon>Bacillati</taxon>
        <taxon>Bacillota</taxon>
        <taxon>Bacilli</taxon>
        <taxon>Bacillales</taxon>
        <taxon>Bacillaceae</taxon>
        <taxon>Shouchella</taxon>
    </lineage>
</organism>
<name>DNLJ_SHOC1</name>
<feature type="chain" id="PRO_0000313126" description="DNA ligase">
    <location>
        <begin position="1"/>
        <end position="671"/>
    </location>
</feature>
<feature type="domain" description="BRCT" evidence="1">
    <location>
        <begin position="590"/>
        <end position="671"/>
    </location>
</feature>
<feature type="active site" description="N6-AMP-lysine intermediate" evidence="1">
    <location>
        <position position="115"/>
    </location>
</feature>
<feature type="binding site" evidence="1">
    <location>
        <begin position="34"/>
        <end position="38"/>
    </location>
    <ligand>
        <name>NAD(+)</name>
        <dbReference type="ChEBI" id="CHEBI:57540"/>
    </ligand>
</feature>
<feature type="binding site" evidence="1">
    <location>
        <begin position="83"/>
        <end position="84"/>
    </location>
    <ligand>
        <name>NAD(+)</name>
        <dbReference type="ChEBI" id="CHEBI:57540"/>
    </ligand>
</feature>
<feature type="binding site" evidence="1">
    <location>
        <position position="113"/>
    </location>
    <ligand>
        <name>NAD(+)</name>
        <dbReference type="ChEBI" id="CHEBI:57540"/>
    </ligand>
</feature>
<feature type="binding site" evidence="1">
    <location>
        <position position="136"/>
    </location>
    <ligand>
        <name>NAD(+)</name>
        <dbReference type="ChEBI" id="CHEBI:57540"/>
    </ligand>
</feature>
<feature type="binding site" evidence="1">
    <location>
        <position position="170"/>
    </location>
    <ligand>
        <name>NAD(+)</name>
        <dbReference type="ChEBI" id="CHEBI:57540"/>
    </ligand>
</feature>
<feature type="binding site" evidence="1">
    <location>
        <position position="286"/>
    </location>
    <ligand>
        <name>NAD(+)</name>
        <dbReference type="ChEBI" id="CHEBI:57540"/>
    </ligand>
</feature>
<feature type="binding site" evidence="1">
    <location>
        <position position="310"/>
    </location>
    <ligand>
        <name>NAD(+)</name>
        <dbReference type="ChEBI" id="CHEBI:57540"/>
    </ligand>
</feature>
<feature type="binding site" evidence="1">
    <location>
        <position position="404"/>
    </location>
    <ligand>
        <name>Zn(2+)</name>
        <dbReference type="ChEBI" id="CHEBI:29105"/>
    </ligand>
</feature>
<feature type="binding site" evidence="1">
    <location>
        <position position="407"/>
    </location>
    <ligand>
        <name>Zn(2+)</name>
        <dbReference type="ChEBI" id="CHEBI:29105"/>
    </ligand>
</feature>
<feature type="binding site" evidence="1">
    <location>
        <position position="422"/>
    </location>
    <ligand>
        <name>Zn(2+)</name>
        <dbReference type="ChEBI" id="CHEBI:29105"/>
    </ligand>
</feature>
<feature type="binding site" evidence="1">
    <location>
        <position position="427"/>
    </location>
    <ligand>
        <name>Zn(2+)</name>
        <dbReference type="ChEBI" id="CHEBI:29105"/>
    </ligand>
</feature>
<sequence>MDKHQAEKRLKELRLLLEDYGYHYYVLDTPKVPDSEYDRLMNELLQLEADYPDLVTEDSPSVRIGGPPAPSFKKVAHRVPMMSLSNAFNEEDLRAFDRRVRQAVGEHVSYVCELKFDGLAVSLTYENGKLVRGATRGDGTIGEDITNNLRTVPAIPLRLKQPYSIEVRGEAYMPKASFERLNEAKEQAGEEKFANPRNAAAGSLRQLDPKIAAKRNLSLFAYSIGEVEGKNVQTHFDSLMFLKELGFKVNEEAAECETIEDVIAYTEKWSERRHELPYEIDGVVVKVNSLADHEKLGFTAKSPRWATAFKFPAEEVLTVLRDIELNVGRTGVVTPTALLDPVLVAGTTVRRASLHNEDLIREKDVKLGDTVIVKKAGDIIPEVVGVLTDKRTGEEVDFHMPTECPECHSVLERLEGEVALRCLNPKCPAQIREGLIHFVSRNAMNIDGLGEKVISQLFLHQLIADVADLYLLEREELLQLERMGEKSVDNLLAAIEASKENSLERLLFGLGIRFVGAKAAKTLAYEFETMERLQEATFEQLLAVNEIGEKMADSIVSYFQKPEVATLLEKLANAGVNMTYTGPKKAAIAEEAGVFAGKTVVLTGKLSQWTRKEAQEKIEALGGTVTGSVSKKTDLVVAGEDAGSKQKKAESIGIEIWTEEQFTQAVEQSEQ</sequence>